<gene>
    <name evidence="1" type="primary">dxr</name>
    <name type="ordered locus">THEYE_A0226</name>
</gene>
<evidence type="ECO:0000255" key="1">
    <source>
        <dbReference type="HAMAP-Rule" id="MF_00183"/>
    </source>
</evidence>
<protein>
    <recommendedName>
        <fullName evidence="1">1-deoxy-D-xylulose 5-phosphate reductoisomerase</fullName>
        <shortName evidence="1">DXP reductoisomerase</shortName>
        <ecNumber evidence="1">1.1.1.267</ecNumber>
    </recommendedName>
    <alternativeName>
        <fullName evidence="1">1-deoxyxylulose-5-phosphate reductoisomerase</fullName>
    </alternativeName>
    <alternativeName>
        <fullName evidence="1">2-C-methyl-D-erythritol 4-phosphate synthase</fullName>
    </alternativeName>
</protein>
<feature type="chain" id="PRO_1000098522" description="1-deoxy-D-xylulose 5-phosphate reductoisomerase">
    <location>
        <begin position="1"/>
        <end position="381"/>
    </location>
</feature>
<feature type="binding site" evidence="1">
    <location>
        <position position="10"/>
    </location>
    <ligand>
        <name>NADPH</name>
        <dbReference type="ChEBI" id="CHEBI:57783"/>
    </ligand>
</feature>
<feature type="binding site" evidence="1">
    <location>
        <position position="11"/>
    </location>
    <ligand>
        <name>NADPH</name>
        <dbReference type="ChEBI" id="CHEBI:57783"/>
    </ligand>
</feature>
<feature type="binding site" evidence="1">
    <location>
        <position position="12"/>
    </location>
    <ligand>
        <name>NADPH</name>
        <dbReference type="ChEBI" id="CHEBI:57783"/>
    </ligand>
</feature>
<feature type="binding site" evidence="1">
    <location>
        <position position="13"/>
    </location>
    <ligand>
        <name>NADPH</name>
        <dbReference type="ChEBI" id="CHEBI:57783"/>
    </ligand>
</feature>
<feature type="binding site" evidence="1">
    <location>
        <position position="120"/>
    </location>
    <ligand>
        <name>NADPH</name>
        <dbReference type="ChEBI" id="CHEBI:57783"/>
    </ligand>
</feature>
<feature type="binding site" evidence="1">
    <location>
        <position position="121"/>
    </location>
    <ligand>
        <name>1-deoxy-D-xylulose 5-phosphate</name>
        <dbReference type="ChEBI" id="CHEBI:57792"/>
    </ligand>
</feature>
<feature type="binding site" evidence="1">
    <location>
        <position position="122"/>
    </location>
    <ligand>
        <name>NADPH</name>
        <dbReference type="ChEBI" id="CHEBI:57783"/>
    </ligand>
</feature>
<feature type="binding site" evidence="1">
    <location>
        <position position="146"/>
    </location>
    <ligand>
        <name>Mn(2+)</name>
        <dbReference type="ChEBI" id="CHEBI:29035"/>
    </ligand>
</feature>
<feature type="binding site" evidence="1">
    <location>
        <position position="147"/>
    </location>
    <ligand>
        <name>1-deoxy-D-xylulose 5-phosphate</name>
        <dbReference type="ChEBI" id="CHEBI:57792"/>
    </ligand>
</feature>
<feature type="binding site" evidence="1">
    <location>
        <position position="148"/>
    </location>
    <ligand>
        <name>1-deoxy-D-xylulose 5-phosphate</name>
        <dbReference type="ChEBI" id="CHEBI:57792"/>
    </ligand>
</feature>
<feature type="binding site" evidence="1">
    <location>
        <position position="148"/>
    </location>
    <ligand>
        <name>Mn(2+)</name>
        <dbReference type="ChEBI" id="CHEBI:29035"/>
    </ligand>
</feature>
<feature type="binding site" evidence="1">
    <location>
        <position position="172"/>
    </location>
    <ligand>
        <name>1-deoxy-D-xylulose 5-phosphate</name>
        <dbReference type="ChEBI" id="CHEBI:57792"/>
    </ligand>
</feature>
<feature type="binding site" evidence="1">
    <location>
        <position position="195"/>
    </location>
    <ligand>
        <name>1-deoxy-D-xylulose 5-phosphate</name>
        <dbReference type="ChEBI" id="CHEBI:57792"/>
    </ligand>
</feature>
<feature type="binding site" evidence="1">
    <location>
        <position position="201"/>
    </location>
    <ligand>
        <name>NADPH</name>
        <dbReference type="ChEBI" id="CHEBI:57783"/>
    </ligand>
</feature>
<feature type="binding site" evidence="1">
    <location>
        <position position="208"/>
    </location>
    <ligand>
        <name>1-deoxy-D-xylulose 5-phosphate</name>
        <dbReference type="ChEBI" id="CHEBI:57792"/>
    </ligand>
</feature>
<feature type="binding site" evidence="1">
    <location>
        <position position="213"/>
    </location>
    <ligand>
        <name>1-deoxy-D-xylulose 5-phosphate</name>
        <dbReference type="ChEBI" id="CHEBI:57792"/>
    </ligand>
</feature>
<feature type="binding site" evidence="1">
    <location>
        <position position="214"/>
    </location>
    <ligand>
        <name>1-deoxy-D-xylulose 5-phosphate</name>
        <dbReference type="ChEBI" id="CHEBI:57792"/>
    </ligand>
</feature>
<feature type="binding site" evidence="1">
    <location>
        <position position="217"/>
    </location>
    <ligand>
        <name>1-deoxy-D-xylulose 5-phosphate</name>
        <dbReference type="ChEBI" id="CHEBI:57792"/>
    </ligand>
</feature>
<feature type="binding site" evidence="1">
    <location>
        <position position="217"/>
    </location>
    <ligand>
        <name>Mn(2+)</name>
        <dbReference type="ChEBI" id="CHEBI:29035"/>
    </ligand>
</feature>
<name>DXR_THEYD</name>
<comment type="function">
    <text evidence="1">Catalyzes the NADPH-dependent rearrangement and reduction of 1-deoxy-D-xylulose-5-phosphate (DXP) to 2-C-methyl-D-erythritol 4-phosphate (MEP).</text>
</comment>
<comment type="catalytic activity">
    <reaction evidence="1">
        <text>2-C-methyl-D-erythritol 4-phosphate + NADP(+) = 1-deoxy-D-xylulose 5-phosphate + NADPH + H(+)</text>
        <dbReference type="Rhea" id="RHEA:13717"/>
        <dbReference type="ChEBI" id="CHEBI:15378"/>
        <dbReference type="ChEBI" id="CHEBI:57783"/>
        <dbReference type="ChEBI" id="CHEBI:57792"/>
        <dbReference type="ChEBI" id="CHEBI:58262"/>
        <dbReference type="ChEBI" id="CHEBI:58349"/>
        <dbReference type="EC" id="1.1.1.267"/>
    </reaction>
    <physiologicalReaction direction="right-to-left" evidence="1">
        <dbReference type="Rhea" id="RHEA:13719"/>
    </physiologicalReaction>
</comment>
<comment type="cofactor">
    <cofactor evidence="1">
        <name>Mg(2+)</name>
        <dbReference type="ChEBI" id="CHEBI:18420"/>
    </cofactor>
    <cofactor evidence="1">
        <name>Mn(2+)</name>
        <dbReference type="ChEBI" id="CHEBI:29035"/>
    </cofactor>
</comment>
<comment type="pathway">
    <text evidence="1">Isoprenoid biosynthesis; isopentenyl diphosphate biosynthesis via DXP pathway; isopentenyl diphosphate from 1-deoxy-D-xylulose 5-phosphate: step 1/6.</text>
</comment>
<comment type="similarity">
    <text evidence="1">Belongs to the DXR family.</text>
</comment>
<dbReference type="EC" id="1.1.1.267" evidence="1"/>
<dbReference type="EMBL" id="CP001147">
    <property type="protein sequence ID" value="ACI21728.1"/>
    <property type="molecule type" value="Genomic_DNA"/>
</dbReference>
<dbReference type="RefSeq" id="WP_012546435.1">
    <property type="nucleotide sequence ID" value="NC_011296.1"/>
</dbReference>
<dbReference type="RefSeq" id="YP_002248075.1">
    <property type="nucleotide sequence ID" value="NC_011296.1"/>
</dbReference>
<dbReference type="SMR" id="B5YI09"/>
<dbReference type="FunCoup" id="B5YI09">
    <property type="interactions" value="322"/>
</dbReference>
<dbReference type="STRING" id="289376.THEYE_A0226"/>
<dbReference type="EnsemblBacteria" id="ACI21728">
    <property type="protein sequence ID" value="ACI21728"/>
    <property type="gene ID" value="THEYE_A0226"/>
</dbReference>
<dbReference type="KEGG" id="tye:THEYE_A0226"/>
<dbReference type="PATRIC" id="fig|289376.4.peg.223"/>
<dbReference type="eggNOG" id="COG0743">
    <property type="taxonomic scope" value="Bacteria"/>
</dbReference>
<dbReference type="HOGENOM" id="CLU_035714_4_0_0"/>
<dbReference type="InParanoid" id="B5YI09"/>
<dbReference type="OrthoDB" id="9806546at2"/>
<dbReference type="UniPathway" id="UPA00056">
    <property type="reaction ID" value="UER00092"/>
</dbReference>
<dbReference type="Proteomes" id="UP000000718">
    <property type="component" value="Chromosome"/>
</dbReference>
<dbReference type="GO" id="GO:0030604">
    <property type="term" value="F:1-deoxy-D-xylulose-5-phosphate reductoisomerase activity"/>
    <property type="evidence" value="ECO:0000318"/>
    <property type="project" value="GO_Central"/>
</dbReference>
<dbReference type="GO" id="GO:0030145">
    <property type="term" value="F:manganese ion binding"/>
    <property type="evidence" value="ECO:0000318"/>
    <property type="project" value="GO_Central"/>
</dbReference>
<dbReference type="GO" id="GO:0070402">
    <property type="term" value="F:NADPH binding"/>
    <property type="evidence" value="ECO:0000318"/>
    <property type="project" value="GO_Central"/>
</dbReference>
<dbReference type="GO" id="GO:0051484">
    <property type="term" value="P:isopentenyl diphosphate biosynthetic process, methylerythritol 4-phosphate pathway involved in terpenoid biosynthetic process"/>
    <property type="evidence" value="ECO:0000318"/>
    <property type="project" value="GO_Central"/>
</dbReference>
<dbReference type="FunFam" id="1.10.1740.10:FF:000004">
    <property type="entry name" value="1-deoxy-D-xylulose 5-phosphate reductoisomerase"/>
    <property type="match status" value="1"/>
</dbReference>
<dbReference type="FunFam" id="3.40.50.720:FF:000045">
    <property type="entry name" value="1-deoxy-D-xylulose 5-phosphate reductoisomerase"/>
    <property type="match status" value="1"/>
</dbReference>
<dbReference type="Gene3D" id="1.10.1740.10">
    <property type="match status" value="1"/>
</dbReference>
<dbReference type="Gene3D" id="3.40.50.720">
    <property type="entry name" value="NAD(P)-binding Rossmann-like Domain"/>
    <property type="match status" value="1"/>
</dbReference>
<dbReference type="HAMAP" id="MF_00183">
    <property type="entry name" value="DXP_reductoisom"/>
    <property type="match status" value="1"/>
</dbReference>
<dbReference type="InterPro" id="IPR003821">
    <property type="entry name" value="DXP_reductoisomerase"/>
</dbReference>
<dbReference type="InterPro" id="IPR013644">
    <property type="entry name" value="DXP_reductoisomerase_C"/>
</dbReference>
<dbReference type="InterPro" id="IPR013512">
    <property type="entry name" value="DXP_reductoisomerase_N"/>
</dbReference>
<dbReference type="InterPro" id="IPR026877">
    <property type="entry name" value="DXPR_C"/>
</dbReference>
<dbReference type="InterPro" id="IPR036169">
    <property type="entry name" value="DXPR_C_sf"/>
</dbReference>
<dbReference type="InterPro" id="IPR036291">
    <property type="entry name" value="NAD(P)-bd_dom_sf"/>
</dbReference>
<dbReference type="NCBIfam" id="TIGR00243">
    <property type="entry name" value="Dxr"/>
    <property type="match status" value="1"/>
</dbReference>
<dbReference type="NCBIfam" id="NF009114">
    <property type="entry name" value="PRK12464.1"/>
    <property type="match status" value="1"/>
</dbReference>
<dbReference type="PANTHER" id="PTHR30525">
    <property type="entry name" value="1-DEOXY-D-XYLULOSE 5-PHOSPHATE REDUCTOISOMERASE"/>
    <property type="match status" value="1"/>
</dbReference>
<dbReference type="PANTHER" id="PTHR30525:SF0">
    <property type="entry name" value="1-DEOXY-D-XYLULOSE 5-PHOSPHATE REDUCTOISOMERASE, CHLOROPLASTIC"/>
    <property type="match status" value="1"/>
</dbReference>
<dbReference type="Pfam" id="PF08436">
    <property type="entry name" value="DXP_redisom_C"/>
    <property type="match status" value="1"/>
</dbReference>
<dbReference type="Pfam" id="PF02670">
    <property type="entry name" value="DXP_reductoisom"/>
    <property type="match status" value="1"/>
</dbReference>
<dbReference type="Pfam" id="PF13288">
    <property type="entry name" value="DXPR_C"/>
    <property type="match status" value="1"/>
</dbReference>
<dbReference type="PIRSF" id="PIRSF006205">
    <property type="entry name" value="Dxp_reductismrs"/>
    <property type="match status" value="1"/>
</dbReference>
<dbReference type="SUPFAM" id="SSF69055">
    <property type="entry name" value="1-deoxy-D-xylulose-5-phosphate reductoisomerase, C-terminal domain"/>
    <property type="match status" value="1"/>
</dbReference>
<dbReference type="SUPFAM" id="SSF55347">
    <property type="entry name" value="Glyceraldehyde-3-phosphate dehydrogenase-like, C-terminal domain"/>
    <property type="match status" value="1"/>
</dbReference>
<dbReference type="SUPFAM" id="SSF51735">
    <property type="entry name" value="NAD(P)-binding Rossmann-fold domains"/>
    <property type="match status" value="1"/>
</dbReference>
<proteinExistence type="inferred from homology"/>
<accession>B5YI09</accession>
<organism>
    <name type="scientific">Thermodesulfovibrio yellowstonii (strain ATCC 51303 / DSM 11347 / YP87)</name>
    <dbReference type="NCBI Taxonomy" id="289376"/>
    <lineage>
        <taxon>Bacteria</taxon>
        <taxon>Pseudomonadati</taxon>
        <taxon>Nitrospirota</taxon>
        <taxon>Thermodesulfovibrionia</taxon>
        <taxon>Thermodesulfovibrionales</taxon>
        <taxon>Thermodesulfovibrionaceae</taxon>
        <taxon>Thermodesulfovibrio</taxon>
    </lineage>
</organism>
<sequence>MKKVVILGSTGSIGKNALEVIRKFPDKFKVLGLAAKSSVNILEEQIKEFNPQYVAVFDKKACDELRKKVKNLEILKGNEGICKLAKLKEADIILSAIVGAAGLIPTFEAVKEGKTIGVANKESFVMAGELIKKQGKISGAKIIPVDSEHSAVFQCINGCNKPYIKKIWLTASGGPFRGKKSYEIENVTPQEALNHPKWKMGKRITIDSATLMNKGFEVIEAHYLFDMPAENIGVLIHPQSIIHCLVEFIDGTYLAQMSNPDMKAPIALALSFPERLPEIVPPIDWSITTKLQFEIPDTEVFPCLKLAYEALNAGGSMPAVLNAADEVAVEAFLSGRLKFKEIYKIIKKVMDAHKIVSVSSIEEVLEADSWARKMAKKEIGE</sequence>
<keyword id="KW-0414">Isoprene biosynthesis</keyword>
<keyword id="KW-0464">Manganese</keyword>
<keyword id="KW-0479">Metal-binding</keyword>
<keyword id="KW-0521">NADP</keyword>
<keyword id="KW-0560">Oxidoreductase</keyword>
<keyword id="KW-1185">Reference proteome</keyword>
<reference key="1">
    <citation type="submission" date="2008-08" db="EMBL/GenBank/DDBJ databases">
        <title>The complete genome sequence of Thermodesulfovibrio yellowstonii strain ATCC 51303 / DSM 11347 / YP87.</title>
        <authorList>
            <person name="Dodson R.J."/>
            <person name="Durkin A.S."/>
            <person name="Wu M."/>
            <person name="Eisen J."/>
            <person name="Sutton G."/>
        </authorList>
    </citation>
    <scope>NUCLEOTIDE SEQUENCE [LARGE SCALE GENOMIC DNA]</scope>
    <source>
        <strain>ATCC 51303 / DSM 11347 / YP87</strain>
    </source>
</reference>